<evidence type="ECO:0000255" key="1">
    <source>
        <dbReference type="HAMAP-Rule" id="MF_00144"/>
    </source>
</evidence>
<keyword id="KW-0067">ATP-binding</keyword>
<keyword id="KW-0963">Cytoplasm</keyword>
<keyword id="KW-1015">Disulfide bond</keyword>
<keyword id="KW-0547">Nucleotide-binding</keyword>
<keyword id="KW-1185">Reference proteome</keyword>
<keyword id="KW-0694">RNA-binding</keyword>
<keyword id="KW-0808">Transferase</keyword>
<keyword id="KW-0819">tRNA processing</keyword>
<keyword id="KW-0820">tRNA-binding</keyword>
<comment type="function">
    <text evidence="1">Catalyzes the 2-thiolation of uridine at the wobble position (U34) of tRNA, leading to the formation of s(2)U34.</text>
</comment>
<comment type="catalytic activity">
    <reaction evidence="1">
        <text>S-sulfanyl-L-cysteinyl-[protein] + uridine(34) in tRNA + AH2 + ATP = 2-thiouridine(34) in tRNA + L-cysteinyl-[protein] + A + AMP + diphosphate + H(+)</text>
        <dbReference type="Rhea" id="RHEA:47032"/>
        <dbReference type="Rhea" id="RHEA-COMP:10131"/>
        <dbReference type="Rhea" id="RHEA-COMP:11726"/>
        <dbReference type="Rhea" id="RHEA-COMP:11727"/>
        <dbReference type="Rhea" id="RHEA-COMP:11728"/>
        <dbReference type="ChEBI" id="CHEBI:13193"/>
        <dbReference type="ChEBI" id="CHEBI:15378"/>
        <dbReference type="ChEBI" id="CHEBI:17499"/>
        <dbReference type="ChEBI" id="CHEBI:29950"/>
        <dbReference type="ChEBI" id="CHEBI:30616"/>
        <dbReference type="ChEBI" id="CHEBI:33019"/>
        <dbReference type="ChEBI" id="CHEBI:61963"/>
        <dbReference type="ChEBI" id="CHEBI:65315"/>
        <dbReference type="ChEBI" id="CHEBI:87170"/>
        <dbReference type="ChEBI" id="CHEBI:456215"/>
        <dbReference type="EC" id="2.8.1.13"/>
    </reaction>
</comment>
<comment type="subcellular location">
    <subcellularLocation>
        <location evidence="1">Cytoplasm</location>
    </subcellularLocation>
</comment>
<comment type="similarity">
    <text evidence="1">Belongs to the MnmA/TRMU family.</text>
</comment>
<reference key="1">
    <citation type="submission" date="2003-06" db="EMBL/GenBank/DDBJ databases">
        <title>The complete genome sequence of Haemophilus ducreyi.</title>
        <authorList>
            <person name="Munson R.S. Jr."/>
            <person name="Ray W.C."/>
            <person name="Mahairas G."/>
            <person name="Sabo P."/>
            <person name="Mungur R."/>
            <person name="Johnson L."/>
            <person name="Nguyen D."/>
            <person name="Wang J."/>
            <person name="Forst C."/>
            <person name="Hood L."/>
        </authorList>
    </citation>
    <scope>NUCLEOTIDE SEQUENCE [LARGE SCALE GENOMIC DNA]</scope>
    <source>
        <strain>35000HP / ATCC 700724</strain>
    </source>
</reference>
<sequence>MALNSITYQKCFHTSAQQYADNKNKKVIIGMSGGVDSSVSAFILQQQGYQVEGLFMKNWEEDDDTDYCTAAADLADAQNVADRLGIKLHKINFAAEYWDNVFEHFLAEYQAGRTPNPDILCNKEIKFKAFLEYAAEDLGADYIATGHYVRRSADNENAQLLRGLDANKDQSYFLYTLSNQQVAKSLFPVGEIEKPMVRQIATDLGLVTAKKKDSTGICFIGERKFKEFLARFLPAQPGDISTVEGEIVGRHDGLMYYTLGQRKGLGIGGVKGLSEDPFYVVEKDLVNNVLIVAQGHDNSALLSTGLIANQLHWVDRKTIGDTLRCTVKTRYRQTDIACLVEPIDAENIRVIFDEPQIAVTPGQSAVFYQGEVCLGGGVIEAQLK</sequence>
<organism>
    <name type="scientific">Haemophilus ducreyi (strain 35000HP / ATCC 700724)</name>
    <dbReference type="NCBI Taxonomy" id="233412"/>
    <lineage>
        <taxon>Bacteria</taxon>
        <taxon>Pseudomonadati</taxon>
        <taxon>Pseudomonadota</taxon>
        <taxon>Gammaproteobacteria</taxon>
        <taxon>Pasteurellales</taxon>
        <taxon>Pasteurellaceae</taxon>
        <taxon>Haemophilus</taxon>
    </lineage>
</organism>
<feature type="chain" id="PRO_0000121635" description="tRNA-specific 2-thiouridylase MnmA">
    <location>
        <begin position="1"/>
        <end position="384"/>
    </location>
</feature>
<feature type="region of interest" description="Interaction with target base in tRNA" evidence="1">
    <location>
        <begin position="116"/>
        <end position="118"/>
    </location>
</feature>
<feature type="region of interest" description="Interaction with tRNA" evidence="1">
    <location>
        <begin position="168"/>
        <end position="170"/>
    </location>
</feature>
<feature type="region of interest" description="Interaction with tRNA" evidence="1">
    <location>
        <begin position="330"/>
        <end position="331"/>
    </location>
</feature>
<feature type="active site" description="Nucleophile" evidence="1">
    <location>
        <position position="121"/>
    </location>
</feature>
<feature type="active site" description="Cysteine persulfide intermediate" evidence="1">
    <location>
        <position position="218"/>
    </location>
</feature>
<feature type="binding site" evidence="1">
    <location>
        <begin position="30"/>
        <end position="37"/>
    </location>
    <ligand>
        <name>ATP</name>
        <dbReference type="ChEBI" id="CHEBI:30616"/>
    </ligand>
</feature>
<feature type="binding site" evidence="1">
    <location>
        <position position="56"/>
    </location>
    <ligand>
        <name>ATP</name>
        <dbReference type="ChEBI" id="CHEBI:30616"/>
    </ligand>
</feature>
<feature type="binding site" evidence="1">
    <location>
        <position position="146"/>
    </location>
    <ligand>
        <name>ATP</name>
        <dbReference type="ChEBI" id="CHEBI:30616"/>
    </ligand>
</feature>
<feature type="site" description="Interaction with tRNA" evidence="1">
    <location>
        <position position="147"/>
    </location>
</feature>
<feature type="site" description="Interaction with tRNA" evidence="1">
    <location>
        <position position="363"/>
    </location>
</feature>
<feature type="disulfide bond" description="Alternate" evidence="1">
    <location>
        <begin position="121"/>
        <end position="218"/>
    </location>
</feature>
<protein>
    <recommendedName>
        <fullName evidence="1">tRNA-specific 2-thiouridylase MnmA</fullName>
        <ecNumber evidence="1">2.8.1.13</ecNumber>
    </recommendedName>
</protein>
<accession>Q7U342</accession>
<gene>
    <name evidence="1" type="primary">mnmA</name>
    <name type="synonym">trmU</name>
    <name type="ordered locus">HD_0389</name>
</gene>
<name>MNMA_HAEDU</name>
<dbReference type="EC" id="2.8.1.13" evidence="1"/>
<dbReference type="EMBL" id="AE017143">
    <property type="protein sequence ID" value="AAP95358.1"/>
    <property type="molecule type" value="Genomic_DNA"/>
</dbReference>
<dbReference type="RefSeq" id="WP_010944411.1">
    <property type="nucleotide sequence ID" value="NC_002940.2"/>
</dbReference>
<dbReference type="SMR" id="Q7U342"/>
<dbReference type="STRING" id="233412.HD_0389"/>
<dbReference type="KEGG" id="hdu:HD_0389"/>
<dbReference type="eggNOG" id="COG0482">
    <property type="taxonomic scope" value="Bacteria"/>
</dbReference>
<dbReference type="HOGENOM" id="CLU_035188_1_0_6"/>
<dbReference type="OrthoDB" id="9800696at2"/>
<dbReference type="Proteomes" id="UP000001022">
    <property type="component" value="Chromosome"/>
</dbReference>
<dbReference type="GO" id="GO:0005737">
    <property type="term" value="C:cytoplasm"/>
    <property type="evidence" value="ECO:0007669"/>
    <property type="project" value="UniProtKB-SubCell"/>
</dbReference>
<dbReference type="GO" id="GO:0005524">
    <property type="term" value="F:ATP binding"/>
    <property type="evidence" value="ECO:0007669"/>
    <property type="project" value="UniProtKB-KW"/>
</dbReference>
<dbReference type="GO" id="GO:0000049">
    <property type="term" value="F:tRNA binding"/>
    <property type="evidence" value="ECO:0007669"/>
    <property type="project" value="UniProtKB-KW"/>
</dbReference>
<dbReference type="GO" id="GO:0103016">
    <property type="term" value="F:tRNA-uridine 2-sulfurtransferase activity"/>
    <property type="evidence" value="ECO:0007669"/>
    <property type="project" value="UniProtKB-EC"/>
</dbReference>
<dbReference type="GO" id="GO:0002143">
    <property type="term" value="P:tRNA wobble position uridine thiolation"/>
    <property type="evidence" value="ECO:0007669"/>
    <property type="project" value="TreeGrafter"/>
</dbReference>
<dbReference type="CDD" id="cd01998">
    <property type="entry name" value="MnmA_TRMU-like"/>
    <property type="match status" value="1"/>
</dbReference>
<dbReference type="FunFam" id="2.30.30.280:FF:000001">
    <property type="entry name" value="tRNA-specific 2-thiouridylase MnmA"/>
    <property type="match status" value="1"/>
</dbReference>
<dbReference type="FunFam" id="2.40.30.10:FF:000023">
    <property type="entry name" value="tRNA-specific 2-thiouridylase MnmA"/>
    <property type="match status" value="1"/>
</dbReference>
<dbReference type="FunFam" id="3.40.50.620:FF:000004">
    <property type="entry name" value="tRNA-specific 2-thiouridylase MnmA"/>
    <property type="match status" value="1"/>
</dbReference>
<dbReference type="Gene3D" id="2.30.30.280">
    <property type="entry name" value="Adenine nucleotide alpha hydrolases-like domains"/>
    <property type="match status" value="1"/>
</dbReference>
<dbReference type="Gene3D" id="3.40.50.620">
    <property type="entry name" value="HUPs"/>
    <property type="match status" value="1"/>
</dbReference>
<dbReference type="Gene3D" id="2.40.30.10">
    <property type="entry name" value="Translation factors"/>
    <property type="match status" value="1"/>
</dbReference>
<dbReference type="HAMAP" id="MF_00144">
    <property type="entry name" value="tRNA_thiouridyl_MnmA"/>
    <property type="match status" value="1"/>
</dbReference>
<dbReference type="InterPro" id="IPR004506">
    <property type="entry name" value="MnmA-like"/>
</dbReference>
<dbReference type="InterPro" id="IPR046885">
    <property type="entry name" value="MnmA-like_C"/>
</dbReference>
<dbReference type="InterPro" id="IPR046884">
    <property type="entry name" value="MnmA-like_central"/>
</dbReference>
<dbReference type="InterPro" id="IPR023382">
    <property type="entry name" value="MnmA-like_central_sf"/>
</dbReference>
<dbReference type="InterPro" id="IPR014729">
    <property type="entry name" value="Rossmann-like_a/b/a_fold"/>
</dbReference>
<dbReference type="NCBIfam" id="NF001138">
    <property type="entry name" value="PRK00143.1"/>
    <property type="match status" value="1"/>
</dbReference>
<dbReference type="NCBIfam" id="TIGR00420">
    <property type="entry name" value="trmU"/>
    <property type="match status" value="1"/>
</dbReference>
<dbReference type="PANTHER" id="PTHR11933:SF5">
    <property type="entry name" value="MITOCHONDRIAL TRNA-SPECIFIC 2-THIOURIDYLASE 1"/>
    <property type="match status" value="1"/>
</dbReference>
<dbReference type="PANTHER" id="PTHR11933">
    <property type="entry name" value="TRNA 5-METHYLAMINOMETHYL-2-THIOURIDYLATE -METHYLTRANSFERASE"/>
    <property type="match status" value="1"/>
</dbReference>
<dbReference type="Pfam" id="PF03054">
    <property type="entry name" value="tRNA_Me_trans"/>
    <property type="match status" value="1"/>
</dbReference>
<dbReference type="Pfam" id="PF20258">
    <property type="entry name" value="tRNA_Me_trans_C"/>
    <property type="match status" value="1"/>
</dbReference>
<dbReference type="Pfam" id="PF20259">
    <property type="entry name" value="tRNA_Me_trans_M"/>
    <property type="match status" value="1"/>
</dbReference>
<dbReference type="SUPFAM" id="SSF52402">
    <property type="entry name" value="Adenine nucleotide alpha hydrolases-like"/>
    <property type="match status" value="1"/>
</dbReference>
<proteinExistence type="inferred from homology"/>